<accession>A8GXS3</accession>
<reference key="1">
    <citation type="submission" date="2007-09" db="EMBL/GenBank/DDBJ databases">
        <title>Complete genome sequencing of Rickettsia bellii.</title>
        <authorList>
            <person name="Madan A."/>
            <person name="Lee H."/>
            <person name="Madan A."/>
            <person name="Yoon J.-G."/>
            <person name="Ryu G.-Y."/>
            <person name="Dasch G."/>
            <person name="Ereemeva M."/>
        </authorList>
    </citation>
    <scope>NUCLEOTIDE SEQUENCE [LARGE SCALE GENOMIC DNA]</scope>
    <source>
        <strain>OSU 85-389</strain>
    </source>
</reference>
<keyword id="KW-0963">Cytoplasm</keyword>
<keyword id="KW-0269">Exonuclease</keyword>
<keyword id="KW-0378">Hydrolase</keyword>
<keyword id="KW-0540">Nuclease</keyword>
<feature type="chain" id="PRO_1000048781" description="Exodeoxyribonuclease 7 large subunit">
    <location>
        <begin position="1"/>
        <end position="442"/>
    </location>
</feature>
<comment type="function">
    <text evidence="1">Bidirectionally degrades single-stranded DNA into large acid-insoluble oligonucleotides, which are then degraded further into small acid-soluble oligonucleotides.</text>
</comment>
<comment type="catalytic activity">
    <reaction evidence="1">
        <text>Exonucleolytic cleavage in either 5'- to 3'- or 3'- to 5'-direction to yield nucleoside 5'-phosphates.</text>
        <dbReference type="EC" id="3.1.11.6"/>
    </reaction>
</comment>
<comment type="subunit">
    <text evidence="1">Heterooligomer composed of large and small subunits.</text>
</comment>
<comment type="subcellular location">
    <subcellularLocation>
        <location evidence="1">Cytoplasm</location>
    </subcellularLocation>
</comment>
<comment type="similarity">
    <text evidence="1">Belongs to the XseA family.</text>
</comment>
<sequence length="442" mass="49474">MLDNFTSSQTTKEFSVSEISNKIKELLENNFGYIKVKGEISGLKIASSGHAYFNLKENTAILACTCWRPILAKIKFPLNDGMEVVISGKLSSYAGNSRYQLSVENLQPAGLGAMVQILNERKARLEKEGLFNKIRKPIPFLPNKIGVITSITGAVIQDIIHRIRERFPTHVIIWPVSVQGENSGNEIAEAIDGFNKLEEANKPDVIIVARGGGSIEDLWSFNDEVLVRATYNSKIPIISAVGHEVDYTLIDLAADKRAPTPTAAAEFAVPVRSILNSTLQSYEKVLVTNTKQLVKNHEQAITNYDKINRYLAHYINHKQQLLDETGFNLLDSLPCLISLKETKLKSFSKERIHPHKIITYKTLELTHKAAYIIKSANNTLKNFEYKLELNSLLLLSLDYHNVLKRGFAIVKGESGNFVSSKTTTEKVLNIQFFDGNIKAVRD</sequence>
<proteinExistence type="inferred from homology"/>
<name>EX7L_RICB8</name>
<dbReference type="EC" id="3.1.11.6" evidence="1"/>
<dbReference type="EMBL" id="CP000849">
    <property type="protein sequence ID" value="ABV79673.1"/>
    <property type="molecule type" value="Genomic_DNA"/>
</dbReference>
<dbReference type="RefSeq" id="WP_011476902.1">
    <property type="nucleotide sequence ID" value="NC_009883.1"/>
</dbReference>
<dbReference type="SMR" id="A8GXS3"/>
<dbReference type="KEGG" id="rbo:A1I_06785"/>
<dbReference type="HOGENOM" id="CLU_023625_2_0_5"/>
<dbReference type="GO" id="GO:0005737">
    <property type="term" value="C:cytoplasm"/>
    <property type="evidence" value="ECO:0007669"/>
    <property type="project" value="UniProtKB-SubCell"/>
</dbReference>
<dbReference type="GO" id="GO:0009318">
    <property type="term" value="C:exodeoxyribonuclease VII complex"/>
    <property type="evidence" value="ECO:0007669"/>
    <property type="project" value="InterPro"/>
</dbReference>
<dbReference type="GO" id="GO:0008855">
    <property type="term" value="F:exodeoxyribonuclease VII activity"/>
    <property type="evidence" value="ECO:0007669"/>
    <property type="project" value="UniProtKB-UniRule"/>
</dbReference>
<dbReference type="GO" id="GO:0003676">
    <property type="term" value="F:nucleic acid binding"/>
    <property type="evidence" value="ECO:0007669"/>
    <property type="project" value="InterPro"/>
</dbReference>
<dbReference type="GO" id="GO:0006308">
    <property type="term" value="P:DNA catabolic process"/>
    <property type="evidence" value="ECO:0007669"/>
    <property type="project" value="UniProtKB-UniRule"/>
</dbReference>
<dbReference type="CDD" id="cd04489">
    <property type="entry name" value="ExoVII_LU_OBF"/>
    <property type="match status" value="1"/>
</dbReference>
<dbReference type="HAMAP" id="MF_00378">
    <property type="entry name" value="Exonuc_7_L"/>
    <property type="match status" value="1"/>
</dbReference>
<dbReference type="InterPro" id="IPR003753">
    <property type="entry name" value="Exonuc_VII_L"/>
</dbReference>
<dbReference type="InterPro" id="IPR020579">
    <property type="entry name" value="Exonuc_VII_lsu_C"/>
</dbReference>
<dbReference type="InterPro" id="IPR025824">
    <property type="entry name" value="OB-fold_nuc-bd_dom"/>
</dbReference>
<dbReference type="NCBIfam" id="TIGR00237">
    <property type="entry name" value="xseA"/>
    <property type="match status" value="1"/>
</dbReference>
<dbReference type="PANTHER" id="PTHR30008">
    <property type="entry name" value="EXODEOXYRIBONUCLEASE 7 LARGE SUBUNIT"/>
    <property type="match status" value="1"/>
</dbReference>
<dbReference type="PANTHER" id="PTHR30008:SF0">
    <property type="entry name" value="EXODEOXYRIBONUCLEASE 7 LARGE SUBUNIT"/>
    <property type="match status" value="1"/>
</dbReference>
<dbReference type="Pfam" id="PF02601">
    <property type="entry name" value="Exonuc_VII_L"/>
    <property type="match status" value="1"/>
</dbReference>
<dbReference type="Pfam" id="PF13742">
    <property type="entry name" value="tRNA_anti_2"/>
    <property type="match status" value="1"/>
</dbReference>
<protein>
    <recommendedName>
        <fullName evidence="1">Exodeoxyribonuclease 7 large subunit</fullName>
        <ecNumber evidence="1">3.1.11.6</ecNumber>
    </recommendedName>
    <alternativeName>
        <fullName evidence="1">Exodeoxyribonuclease VII large subunit</fullName>
        <shortName evidence="1">Exonuclease VII large subunit</shortName>
    </alternativeName>
</protein>
<gene>
    <name evidence="1" type="primary">xseA</name>
    <name type="ordered locus">A1I_06785</name>
</gene>
<evidence type="ECO:0000255" key="1">
    <source>
        <dbReference type="HAMAP-Rule" id="MF_00378"/>
    </source>
</evidence>
<organism>
    <name type="scientific">Rickettsia bellii (strain OSU 85-389)</name>
    <dbReference type="NCBI Taxonomy" id="391896"/>
    <lineage>
        <taxon>Bacteria</taxon>
        <taxon>Pseudomonadati</taxon>
        <taxon>Pseudomonadota</taxon>
        <taxon>Alphaproteobacteria</taxon>
        <taxon>Rickettsiales</taxon>
        <taxon>Rickettsiaceae</taxon>
        <taxon>Rickettsieae</taxon>
        <taxon>Rickettsia</taxon>
        <taxon>belli group</taxon>
    </lineage>
</organism>